<proteinExistence type="inferred from homology"/>
<protein>
    <recommendedName>
        <fullName evidence="1">Octanoyltransferase</fullName>
        <ecNumber evidence="1">2.3.1.181</ecNumber>
    </recommendedName>
    <alternativeName>
        <fullName evidence="1">Lipoate-protein ligase B</fullName>
    </alternativeName>
    <alternativeName>
        <fullName evidence="1">Lipoyl/octanoyl transferase</fullName>
    </alternativeName>
    <alternativeName>
        <fullName evidence="1">Octanoyl-[acyl-carrier-protein]-protein N-octanoyltransferase</fullName>
    </alternativeName>
</protein>
<accession>A4IXX8</accession>
<organism>
    <name type="scientific">Francisella tularensis subsp. tularensis (strain WY96-3418)</name>
    <dbReference type="NCBI Taxonomy" id="418136"/>
    <lineage>
        <taxon>Bacteria</taxon>
        <taxon>Pseudomonadati</taxon>
        <taxon>Pseudomonadota</taxon>
        <taxon>Gammaproteobacteria</taxon>
        <taxon>Thiotrichales</taxon>
        <taxon>Francisellaceae</taxon>
        <taxon>Francisella</taxon>
    </lineage>
</organism>
<reference key="1">
    <citation type="journal article" date="2007" name="PLoS ONE">
        <title>Complete genomic characterization of a pathogenic A.II strain of Francisella tularensis subspecies tularensis.</title>
        <authorList>
            <person name="Beckstrom-Sternberg S.M."/>
            <person name="Auerbach R.K."/>
            <person name="Godbole S."/>
            <person name="Pearson J.V."/>
            <person name="Beckstrom-Sternberg J.S."/>
            <person name="Deng Z."/>
            <person name="Munk C."/>
            <person name="Kubota K."/>
            <person name="Zhou Y."/>
            <person name="Bruce D."/>
            <person name="Noronha J."/>
            <person name="Scheuermann R.H."/>
            <person name="Wang A."/>
            <person name="Wei X."/>
            <person name="Wang J."/>
            <person name="Hao J."/>
            <person name="Wagner D.M."/>
            <person name="Brettin T.S."/>
            <person name="Brown N."/>
            <person name="Gilna P."/>
            <person name="Keim P.S."/>
        </authorList>
    </citation>
    <scope>NUCLEOTIDE SEQUENCE [LARGE SCALE GENOMIC DNA]</scope>
    <source>
        <strain>WY96-3418</strain>
    </source>
</reference>
<dbReference type="EC" id="2.3.1.181" evidence="1"/>
<dbReference type="EMBL" id="CP000608">
    <property type="protein sequence ID" value="ABO46779.1"/>
    <property type="molecule type" value="Genomic_DNA"/>
</dbReference>
<dbReference type="RefSeq" id="WP_003015973.1">
    <property type="nucleotide sequence ID" value="NC_009257.1"/>
</dbReference>
<dbReference type="SMR" id="A4IXX8"/>
<dbReference type="KEGG" id="ftw:FTW_0938"/>
<dbReference type="HOGENOM" id="CLU_035168_3_1_6"/>
<dbReference type="UniPathway" id="UPA00538">
    <property type="reaction ID" value="UER00592"/>
</dbReference>
<dbReference type="GO" id="GO:0005737">
    <property type="term" value="C:cytoplasm"/>
    <property type="evidence" value="ECO:0007669"/>
    <property type="project" value="UniProtKB-SubCell"/>
</dbReference>
<dbReference type="GO" id="GO:0033819">
    <property type="term" value="F:lipoyl(octanoyl) transferase activity"/>
    <property type="evidence" value="ECO:0007669"/>
    <property type="project" value="UniProtKB-EC"/>
</dbReference>
<dbReference type="GO" id="GO:0036211">
    <property type="term" value="P:protein modification process"/>
    <property type="evidence" value="ECO:0007669"/>
    <property type="project" value="InterPro"/>
</dbReference>
<dbReference type="CDD" id="cd16444">
    <property type="entry name" value="LipB"/>
    <property type="match status" value="1"/>
</dbReference>
<dbReference type="FunFam" id="3.30.930.10:FF:000020">
    <property type="entry name" value="Octanoyltransferase"/>
    <property type="match status" value="1"/>
</dbReference>
<dbReference type="Gene3D" id="3.30.930.10">
    <property type="entry name" value="Bira Bifunctional Protein, Domain 2"/>
    <property type="match status" value="1"/>
</dbReference>
<dbReference type="HAMAP" id="MF_00013">
    <property type="entry name" value="LipB"/>
    <property type="match status" value="1"/>
</dbReference>
<dbReference type="InterPro" id="IPR045864">
    <property type="entry name" value="aa-tRNA-synth_II/BPL/LPL"/>
</dbReference>
<dbReference type="InterPro" id="IPR004143">
    <property type="entry name" value="BPL_LPL_catalytic"/>
</dbReference>
<dbReference type="InterPro" id="IPR000544">
    <property type="entry name" value="Octanoyltransferase"/>
</dbReference>
<dbReference type="InterPro" id="IPR020605">
    <property type="entry name" value="Octanoyltransferase_CS"/>
</dbReference>
<dbReference type="NCBIfam" id="TIGR00214">
    <property type="entry name" value="lipB"/>
    <property type="match status" value="1"/>
</dbReference>
<dbReference type="NCBIfam" id="NF010922">
    <property type="entry name" value="PRK14342.1"/>
    <property type="match status" value="1"/>
</dbReference>
<dbReference type="PANTHER" id="PTHR10993:SF7">
    <property type="entry name" value="LIPOYLTRANSFERASE 2, MITOCHONDRIAL-RELATED"/>
    <property type="match status" value="1"/>
</dbReference>
<dbReference type="PANTHER" id="PTHR10993">
    <property type="entry name" value="OCTANOYLTRANSFERASE"/>
    <property type="match status" value="1"/>
</dbReference>
<dbReference type="Pfam" id="PF21948">
    <property type="entry name" value="LplA-B_cat"/>
    <property type="match status" value="1"/>
</dbReference>
<dbReference type="PIRSF" id="PIRSF016262">
    <property type="entry name" value="LPLase"/>
    <property type="match status" value="1"/>
</dbReference>
<dbReference type="SUPFAM" id="SSF55681">
    <property type="entry name" value="Class II aaRS and biotin synthetases"/>
    <property type="match status" value="1"/>
</dbReference>
<dbReference type="PROSITE" id="PS51733">
    <property type="entry name" value="BPL_LPL_CATALYTIC"/>
    <property type="match status" value="1"/>
</dbReference>
<dbReference type="PROSITE" id="PS01313">
    <property type="entry name" value="LIPB"/>
    <property type="match status" value="1"/>
</dbReference>
<feature type="chain" id="PRO_1000001103" description="Octanoyltransferase">
    <location>
        <begin position="1"/>
        <end position="206"/>
    </location>
</feature>
<feature type="domain" description="BPL/LPL catalytic" evidence="2">
    <location>
        <begin position="30"/>
        <end position="206"/>
    </location>
</feature>
<feature type="active site" description="Acyl-thioester intermediate" evidence="1">
    <location>
        <position position="168"/>
    </location>
</feature>
<feature type="binding site" evidence="1">
    <location>
        <begin position="69"/>
        <end position="76"/>
    </location>
    <ligand>
        <name>substrate</name>
    </ligand>
</feature>
<feature type="binding site" evidence="1">
    <location>
        <begin position="137"/>
        <end position="139"/>
    </location>
    <ligand>
        <name>substrate</name>
    </ligand>
</feature>
<feature type="binding site" evidence="1">
    <location>
        <begin position="150"/>
        <end position="152"/>
    </location>
    <ligand>
        <name>substrate</name>
    </ligand>
</feature>
<feature type="site" description="Lowers pKa of active site Cys" evidence="1">
    <location>
        <position position="134"/>
    </location>
</feature>
<gene>
    <name evidence="1" type="primary">lipB</name>
    <name type="ordered locus">FTW_0938</name>
</gene>
<keyword id="KW-0012">Acyltransferase</keyword>
<keyword id="KW-0963">Cytoplasm</keyword>
<keyword id="KW-0808">Transferase</keyword>
<evidence type="ECO:0000255" key="1">
    <source>
        <dbReference type="HAMAP-Rule" id="MF_00013"/>
    </source>
</evidence>
<evidence type="ECO:0000255" key="2">
    <source>
        <dbReference type="PROSITE-ProRule" id="PRU01067"/>
    </source>
</evidence>
<name>LIPB_FRATW</name>
<sequence>MNNIYQKDLGLQQYTKVFEDMLEFTSTRTPETNDEIWLVEHPAVFTQGKHGKPEHILNSHNIPIVATDRGGQVTYHGPGQAVIYFLLDIKRNKLGAKKLVTTVEQACINMLDKYYNLKAHIIDGAHGIYINNQKIASLGLRIKQGKSYHGIAINTNMDLTPFSYINPCGYSGLKMCQLANFYQEADIKKVQQQYTAEFVTLLNNSI</sequence>
<comment type="function">
    <text evidence="1">Catalyzes the transfer of endogenously produced octanoic acid from octanoyl-acyl-carrier-protein onto the lipoyl domains of lipoate-dependent enzymes. Lipoyl-ACP can also act as a substrate although octanoyl-ACP is likely to be the physiological substrate.</text>
</comment>
<comment type="catalytic activity">
    <reaction evidence="1">
        <text>octanoyl-[ACP] + L-lysyl-[protein] = N(6)-octanoyl-L-lysyl-[protein] + holo-[ACP] + H(+)</text>
        <dbReference type="Rhea" id="RHEA:17665"/>
        <dbReference type="Rhea" id="RHEA-COMP:9636"/>
        <dbReference type="Rhea" id="RHEA-COMP:9685"/>
        <dbReference type="Rhea" id="RHEA-COMP:9752"/>
        <dbReference type="Rhea" id="RHEA-COMP:9928"/>
        <dbReference type="ChEBI" id="CHEBI:15378"/>
        <dbReference type="ChEBI" id="CHEBI:29969"/>
        <dbReference type="ChEBI" id="CHEBI:64479"/>
        <dbReference type="ChEBI" id="CHEBI:78463"/>
        <dbReference type="ChEBI" id="CHEBI:78809"/>
        <dbReference type="EC" id="2.3.1.181"/>
    </reaction>
</comment>
<comment type="pathway">
    <text evidence="1">Protein modification; protein lipoylation via endogenous pathway; protein N(6)-(lipoyl)lysine from octanoyl-[acyl-carrier-protein]: step 1/2.</text>
</comment>
<comment type="subcellular location">
    <subcellularLocation>
        <location evidence="1">Cytoplasm</location>
    </subcellularLocation>
</comment>
<comment type="miscellaneous">
    <text evidence="1">In the reaction, the free carboxyl group of octanoic acid is attached via an amide linkage to the epsilon-amino group of a specific lysine residue of lipoyl domains of lipoate-dependent enzymes.</text>
</comment>
<comment type="similarity">
    <text evidence="1">Belongs to the LipB family.</text>
</comment>